<organism>
    <name type="scientific">Escherichia coli O1:K1 / APEC</name>
    <dbReference type="NCBI Taxonomy" id="405955"/>
    <lineage>
        <taxon>Bacteria</taxon>
        <taxon>Pseudomonadati</taxon>
        <taxon>Pseudomonadota</taxon>
        <taxon>Gammaproteobacteria</taxon>
        <taxon>Enterobacterales</taxon>
        <taxon>Enterobacteriaceae</taxon>
        <taxon>Escherichia</taxon>
    </lineage>
</organism>
<evidence type="ECO:0000255" key="1">
    <source>
        <dbReference type="HAMAP-Rule" id="MF_00188"/>
    </source>
</evidence>
<keyword id="KW-0997">Cell inner membrane</keyword>
<keyword id="KW-1003">Cell membrane</keyword>
<keyword id="KW-0378">Hydrolase</keyword>
<keyword id="KW-0472">Membrane</keyword>
<keyword id="KW-0479">Metal-binding</keyword>
<keyword id="KW-0482">Metalloprotease</keyword>
<keyword id="KW-0645">Protease</keyword>
<keyword id="KW-1185">Reference proteome</keyword>
<keyword id="KW-0346">Stress response</keyword>
<keyword id="KW-0812">Transmembrane</keyword>
<keyword id="KW-1133">Transmembrane helix</keyword>
<keyword id="KW-0862">Zinc</keyword>
<comment type="cofactor">
    <cofactor evidence="1">
        <name>Zn(2+)</name>
        <dbReference type="ChEBI" id="CHEBI:29105"/>
    </cofactor>
    <text evidence="1">Binds 1 zinc ion per subunit.</text>
</comment>
<comment type="subcellular location">
    <subcellularLocation>
        <location evidence="1">Cell inner membrane</location>
        <topology evidence="1">Multi-pass membrane protein</topology>
    </subcellularLocation>
</comment>
<comment type="similarity">
    <text evidence="1">Belongs to the peptidase M48B family.</text>
</comment>
<sequence>MMRIALFLLTNLAVMVVFGLVLSLTGIQSSSVQGLMIMALLFGFGGSFVSLLMSKWMALRSVGGEVIEQPRNERERWLVNTVATQARQAGIAMPQVAIYHAPDINAFATGARRDASLVAVSTGLLQNMSPDEAEAVIAHEISHIANGDMVTMTLIQGVVNTFVIFISRILAQLAAGFMGGNRDEGEESNGNPLIYFAVATVLELVFGILASIITMWFSRHREFHADAGSAKLVGREKMIAALQRLKTSYEPQEATSMMAFCINGKSKSLSELFMTHPPLDKRIEALRTGEYLK</sequence>
<feature type="chain" id="PRO_1000020862" description="Protease HtpX">
    <location>
        <begin position="1"/>
        <end position="293"/>
    </location>
</feature>
<feature type="transmembrane region" description="Helical" evidence="1">
    <location>
        <begin position="4"/>
        <end position="24"/>
    </location>
</feature>
<feature type="transmembrane region" description="Helical" evidence="1">
    <location>
        <begin position="34"/>
        <end position="54"/>
    </location>
</feature>
<feature type="transmembrane region" description="Helical" evidence="1">
    <location>
        <begin position="158"/>
        <end position="178"/>
    </location>
</feature>
<feature type="transmembrane region" description="Helical" evidence="1">
    <location>
        <begin position="193"/>
        <end position="213"/>
    </location>
</feature>
<feature type="active site" evidence="1">
    <location>
        <position position="140"/>
    </location>
</feature>
<feature type="binding site" evidence="1">
    <location>
        <position position="139"/>
    </location>
    <ligand>
        <name>Zn(2+)</name>
        <dbReference type="ChEBI" id="CHEBI:29105"/>
        <note>catalytic</note>
    </ligand>
</feature>
<feature type="binding site" evidence="1">
    <location>
        <position position="143"/>
    </location>
    <ligand>
        <name>Zn(2+)</name>
        <dbReference type="ChEBI" id="CHEBI:29105"/>
        <note>catalytic</note>
    </ligand>
</feature>
<feature type="binding site" evidence="1">
    <location>
        <position position="222"/>
    </location>
    <ligand>
        <name>Zn(2+)</name>
        <dbReference type="ChEBI" id="CHEBI:29105"/>
        <note>catalytic</note>
    </ligand>
</feature>
<reference key="1">
    <citation type="journal article" date="2007" name="J. Bacteriol.">
        <title>The genome sequence of avian pathogenic Escherichia coli strain O1:K1:H7 shares strong similarities with human extraintestinal pathogenic E. coli genomes.</title>
        <authorList>
            <person name="Johnson T.J."/>
            <person name="Kariyawasam S."/>
            <person name="Wannemuehler Y."/>
            <person name="Mangiamele P."/>
            <person name="Johnson S.J."/>
            <person name="Doetkott C."/>
            <person name="Skyberg J.A."/>
            <person name="Lynne A.M."/>
            <person name="Johnson J.R."/>
            <person name="Nolan L.K."/>
        </authorList>
    </citation>
    <scope>NUCLEOTIDE SEQUENCE [LARGE SCALE GENOMIC DNA]</scope>
</reference>
<dbReference type="EC" id="3.4.24.-" evidence="1"/>
<dbReference type="EMBL" id="CP000468">
    <property type="protein sequence ID" value="ABJ01185.1"/>
    <property type="molecule type" value="Genomic_DNA"/>
</dbReference>
<dbReference type="RefSeq" id="WP_000984517.1">
    <property type="nucleotide sequence ID" value="NZ_CADILS010000034.1"/>
</dbReference>
<dbReference type="SMR" id="A1ABZ5"/>
<dbReference type="MEROPS" id="M48.002"/>
<dbReference type="GeneID" id="93776079"/>
<dbReference type="KEGG" id="ecv:APECO1_884"/>
<dbReference type="HOGENOM" id="CLU_042266_1_0_6"/>
<dbReference type="Proteomes" id="UP000008216">
    <property type="component" value="Chromosome"/>
</dbReference>
<dbReference type="GO" id="GO:0005886">
    <property type="term" value="C:plasma membrane"/>
    <property type="evidence" value="ECO:0007669"/>
    <property type="project" value="UniProtKB-SubCell"/>
</dbReference>
<dbReference type="GO" id="GO:0004222">
    <property type="term" value="F:metalloendopeptidase activity"/>
    <property type="evidence" value="ECO:0007669"/>
    <property type="project" value="UniProtKB-UniRule"/>
</dbReference>
<dbReference type="GO" id="GO:0008270">
    <property type="term" value="F:zinc ion binding"/>
    <property type="evidence" value="ECO:0007669"/>
    <property type="project" value="UniProtKB-UniRule"/>
</dbReference>
<dbReference type="GO" id="GO:0006508">
    <property type="term" value="P:proteolysis"/>
    <property type="evidence" value="ECO:0007669"/>
    <property type="project" value="UniProtKB-KW"/>
</dbReference>
<dbReference type="CDD" id="cd07335">
    <property type="entry name" value="M48B_HtpX_like"/>
    <property type="match status" value="1"/>
</dbReference>
<dbReference type="FunFam" id="3.30.2010.10:FF:000001">
    <property type="entry name" value="Protease HtpX"/>
    <property type="match status" value="1"/>
</dbReference>
<dbReference type="Gene3D" id="3.30.2010.10">
    <property type="entry name" value="Metalloproteases ('zincins'), catalytic domain"/>
    <property type="match status" value="1"/>
</dbReference>
<dbReference type="HAMAP" id="MF_00188">
    <property type="entry name" value="Pept_M48_protease_HtpX"/>
    <property type="match status" value="1"/>
</dbReference>
<dbReference type="InterPro" id="IPR050083">
    <property type="entry name" value="HtpX_protease"/>
</dbReference>
<dbReference type="InterPro" id="IPR022919">
    <property type="entry name" value="Pept_M48_protease_HtpX"/>
</dbReference>
<dbReference type="InterPro" id="IPR001915">
    <property type="entry name" value="Peptidase_M48"/>
</dbReference>
<dbReference type="NCBIfam" id="NF003965">
    <property type="entry name" value="PRK05457.1"/>
    <property type="match status" value="1"/>
</dbReference>
<dbReference type="PANTHER" id="PTHR43221">
    <property type="entry name" value="PROTEASE HTPX"/>
    <property type="match status" value="1"/>
</dbReference>
<dbReference type="PANTHER" id="PTHR43221:SF1">
    <property type="entry name" value="PROTEASE HTPX"/>
    <property type="match status" value="1"/>
</dbReference>
<dbReference type="Pfam" id="PF01435">
    <property type="entry name" value="Peptidase_M48"/>
    <property type="match status" value="1"/>
</dbReference>
<proteinExistence type="inferred from homology"/>
<name>HTPX_ECOK1</name>
<gene>
    <name evidence="1" type="primary">htpX</name>
    <name type="ordered locus">Ecok1_16910</name>
    <name type="ORF">APECO1_884</name>
</gene>
<protein>
    <recommendedName>
        <fullName evidence="1">Protease HtpX</fullName>
        <ecNumber evidence="1">3.4.24.-</ecNumber>
    </recommendedName>
    <alternativeName>
        <fullName evidence="1">Heat shock protein HtpX</fullName>
    </alternativeName>
</protein>
<accession>A1ABZ5</accession>